<name>ATPE_RHOP5</name>
<keyword id="KW-0066">ATP synthesis</keyword>
<keyword id="KW-0997">Cell inner membrane</keyword>
<keyword id="KW-1003">Cell membrane</keyword>
<keyword id="KW-0139">CF(1)</keyword>
<keyword id="KW-0375">Hydrogen ion transport</keyword>
<keyword id="KW-0406">Ion transport</keyword>
<keyword id="KW-0472">Membrane</keyword>
<keyword id="KW-0813">Transport</keyword>
<organism>
    <name type="scientific">Rhodopseudomonas palustris (strain BisA53)</name>
    <dbReference type="NCBI Taxonomy" id="316055"/>
    <lineage>
        <taxon>Bacteria</taxon>
        <taxon>Pseudomonadati</taxon>
        <taxon>Pseudomonadota</taxon>
        <taxon>Alphaproteobacteria</taxon>
        <taxon>Hyphomicrobiales</taxon>
        <taxon>Nitrobacteraceae</taxon>
        <taxon>Rhodopseudomonas</taxon>
    </lineage>
</organism>
<gene>
    <name evidence="1" type="primary">atpC</name>
    <name type="ordered locus">RPE_0279</name>
</gene>
<comment type="function">
    <text evidence="1">Produces ATP from ADP in the presence of a proton gradient across the membrane.</text>
</comment>
<comment type="subunit">
    <text evidence="1">F-type ATPases have 2 components, CF(1) - the catalytic core - and CF(0) - the membrane proton channel. CF(1) has five subunits: alpha(3), beta(3), gamma(1), delta(1), epsilon(1). CF(0) has three main subunits: a, b and c.</text>
</comment>
<comment type="subcellular location">
    <subcellularLocation>
        <location evidence="1">Cell inner membrane</location>
        <topology evidence="1">Peripheral membrane protein</topology>
    </subcellularLocation>
</comment>
<comment type="similarity">
    <text evidence="1">Belongs to the ATPase epsilon chain family.</text>
</comment>
<reference key="1">
    <citation type="submission" date="2006-09" db="EMBL/GenBank/DDBJ databases">
        <title>Complete sequence of Rhodopseudomonas palustris BisA53.</title>
        <authorList>
            <consortium name="US DOE Joint Genome Institute"/>
            <person name="Copeland A."/>
            <person name="Lucas S."/>
            <person name="Lapidus A."/>
            <person name="Barry K."/>
            <person name="Detter J.C."/>
            <person name="Glavina del Rio T."/>
            <person name="Hammon N."/>
            <person name="Israni S."/>
            <person name="Dalin E."/>
            <person name="Tice H."/>
            <person name="Pitluck S."/>
            <person name="Chain P."/>
            <person name="Malfatti S."/>
            <person name="Shin M."/>
            <person name="Vergez L."/>
            <person name="Schmutz J."/>
            <person name="Larimer F."/>
            <person name="Land M."/>
            <person name="Hauser L."/>
            <person name="Pelletier D.A."/>
            <person name="Kyrpides N."/>
            <person name="Kim E."/>
            <person name="Harwood C.S."/>
            <person name="Oda Y."/>
            <person name="Richardson P."/>
        </authorList>
    </citation>
    <scope>NUCLEOTIDE SEQUENCE [LARGE SCALE GENOMIC DNA]</scope>
    <source>
        <strain>BisA53</strain>
    </source>
</reference>
<sequence>MATFHFDLVSPEKLAFSGEVDQVDVPGIEGDFGVLANHAPVVAVIRPGILTVITGGNQQKIVVLGGIAEVSEKGLTVLADVATSVADLDAAMFAQTVSSMESALAGKQGSELDRAIERLDHYKNIQHQLTATAMH</sequence>
<evidence type="ECO:0000255" key="1">
    <source>
        <dbReference type="HAMAP-Rule" id="MF_00530"/>
    </source>
</evidence>
<protein>
    <recommendedName>
        <fullName evidence="1">ATP synthase epsilon chain</fullName>
    </recommendedName>
    <alternativeName>
        <fullName evidence="1">ATP synthase F1 sector epsilon subunit</fullName>
    </alternativeName>
    <alternativeName>
        <fullName evidence="1">F-ATPase epsilon subunit</fullName>
    </alternativeName>
</protein>
<dbReference type="EMBL" id="CP000463">
    <property type="protein sequence ID" value="ABJ04238.1"/>
    <property type="molecule type" value="Genomic_DNA"/>
</dbReference>
<dbReference type="SMR" id="Q07UZ6"/>
<dbReference type="STRING" id="316055.RPE_0279"/>
<dbReference type="KEGG" id="rpe:RPE_0279"/>
<dbReference type="eggNOG" id="COG0355">
    <property type="taxonomic scope" value="Bacteria"/>
</dbReference>
<dbReference type="HOGENOM" id="CLU_084338_2_1_5"/>
<dbReference type="OrthoDB" id="9799969at2"/>
<dbReference type="GO" id="GO:0005886">
    <property type="term" value="C:plasma membrane"/>
    <property type="evidence" value="ECO:0007669"/>
    <property type="project" value="UniProtKB-SubCell"/>
</dbReference>
<dbReference type="GO" id="GO:0045259">
    <property type="term" value="C:proton-transporting ATP synthase complex"/>
    <property type="evidence" value="ECO:0007669"/>
    <property type="project" value="UniProtKB-KW"/>
</dbReference>
<dbReference type="GO" id="GO:0005524">
    <property type="term" value="F:ATP binding"/>
    <property type="evidence" value="ECO:0007669"/>
    <property type="project" value="UniProtKB-UniRule"/>
</dbReference>
<dbReference type="GO" id="GO:0046933">
    <property type="term" value="F:proton-transporting ATP synthase activity, rotational mechanism"/>
    <property type="evidence" value="ECO:0007669"/>
    <property type="project" value="UniProtKB-UniRule"/>
</dbReference>
<dbReference type="CDD" id="cd12152">
    <property type="entry name" value="F1-ATPase_delta"/>
    <property type="match status" value="1"/>
</dbReference>
<dbReference type="Gene3D" id="2.60.15.10">
    <property type="entry name" value="F0F1 ATP synthase delta/epsilon subunit, N-terminal"/>
    <property type="match status" value="1"/>
</dbReference>
<dbReference type="HAMAP" id="MF_00530">
    <property type="entry name" value="ATP_synth_epsil_bac"/>
    <property type="match status" value="1"/>
</dbReference>
<dbReference type="InterPro" id="IPR001469">
    <property type="entry name" value="ATP_synth_F1_dsu/esu"/>
</dbReference>
<dbReference type="InterPro" id="IPR020546">
    <property type="entry name" value="ATP_synth_F1_dsu/esu_N"/>
</dbReference>
<dbReference type="InterPro" id="IPR036771">
    <property type="entry name" value="ATPsynth_dsu/esu_N"/>
</dbReference>
<dbReference type="NCBIfam" id="TIGR01216">
    <property type="entry name" value="ATP_synt_epsi"/>
    <property type="match status" value="1"/>
</dbReference>
<dbReference type="NCBIfam" id="NF009982">
    <property type="entry name" value="PRK13448.1"/>
    <property type="match status" value="1"/>
</dbReference>
<dbReference type="PANTHER" id="PTHR13822">
    <property type="entry name" value="ATP SYNTHASE DELTA/EPSILON CHAIN"/>
    <property type="match status" value="1"/>
</dbReference>
<dbReference type="PANTHER" id="PTHR13822:SF10">
    <property type="entry name" value="ATP SYNTHASE EPSILON CHAIN, CHLOROPLASTIC"/>
    <property type="match status" value="1"/>
</dbReference>
<dbReference type="Pfam" id="PF02823">
    <property type="entry name" value="ATP-synt_DE_N"/>
    <property type="match status" value="1"/>
</dbReference>
<dbReference type="SUPFAM" id="SSF51344">
    <property type="entry name" value="Epsilon subunit of F1F0-ATP synthase N-terminal domain"/>
    <property type="match status" value="1"/>
</dbReference>
<accession>Q07UZ6</accession>
<proteinExistence type="inferred from homology"/>
<feature type="chain" id="PRO_1000056524" description="ATP synthase epsilon chain">
    <location>
        <begin position="1"/>
        <end position="135"/>
    </location>
</feature>